<sequence length="584" mass="61751">MASVQASRRQWCYLCDLPKMPWAMVWDFSEAVCRGCVNFEGADRIELLIDAARQLKRSHVLPEGRSPGPPALKHPTSKDLASTGSQGSQLPPPQAQAQPSGTGGSVSGPDRYDRATSSSRLALPSPALEYTLGSRLANGLGREEAVAEGARRALLGSIPSLMPPGLLAAAVSGLGGRALTLAPGLSPARPLFGSDFEKEKQQRNADCLAELNEAMRGRAEEWHGRPKAVREQLLALSACAPFNVRFKKDHGLVGRVFAFDATARPPGYEFELKLFTEYPCGSGNVYAGVLAVARQMFHDALREPGKALASSGFKYLEYERRHGSGEWRQLGELLTDGVRSFREPAPAEALPQQYPEPAPAALCGPPPRAPSRNLAPTPRRRKASPEPEGETAGKMTTEEQQQRHWVAPGGPYSSETPGVPSPIAALKNVAEALGHSPKDPGGGGGSVRAGGASPAASSTTQPPAQHRLVARNGEAEVSPTAGAEAVSGGGSGTGATPGAPLCCTLCRERLEDTHFVQCPSVPGHKFCFPCSREFIKAQGPAGEVYCPSGDKCPLVGSSVPWAFMQGEIATILAGDIKVKKERDP</sequence>
<keyword id="KW-0025">Alternative splicing</keyword>
<keyword id="KW-0175">Coiled coil</keyword>
<keyword id="KW-1017">Isopeptide bond</keyword>
<keyword id="KW-0479">Metal-binding</keyword>
<keyword id="KW-0488">Methylation</keyword>
<keyword id="KW-0539">Nucleus</keyword>
<keyword id="KW-0597">Phosphoprotein</keyword>
<keyword id="KW-1185">Reference proteome</keyword>
<keyword id="KW-0678">Repressor</keyword>
<keyword id="KW-0804">Transcription</keyword>
<keyword id="KW-0805">Transcription regulation</keyword>
<keyword id="KW-0808">Transferase</keyword>
<keyword id="KW-0832">Ubl conjugation</keyword>
<keyword id="KW-0833">Ubl conjugation pathway</keyword>
<keyword id="KW-0862">Zinc</keyword>
<keyword id="KW-0863">Zinc-finger</keyword>
<dbReference type="EC" id="2.3.2.27"/>
<dbReference type="EMBL" id="AK031834">
    <property type="protein sequence ID" value="BAC27572.1"/>
    <property type="molecule type" value="mRNA"/>
</dbReference>
<dbReference type="EMBL" id="AK087457">
    <property type="protein sequence ID" value="BAC39883.1"/>
    <property type="molecule type" value="mRNA"/>
</dbReference>
<dbReference type="EMBL" id="BC019164">
    <property type="protein sequence ID" value="AAH19164.2"/>
    <property type="molecule type" value="mRNA"/>
</dbReference>
<dbReference type="EMBL" id="BC036162">
    <property type="protein sequence ID" value="AAH36162.1"/>
    <property type="molecule type" value="mRNA"/>
</dbReference>
<dbReference type="CCDS" id="CCDS20885.1">
    <molecule id="Q8R3Y8-1"/>
</dbReference>
<dbReference type="RefSeq" id="NP_848872.2">
    <molecule id="Q8R3Y8-1"/>
    <property type="nucleotide sequence ID" value="NM_178757.3"/>
</dbReference>
<dbReference type="SMR" id="Q8R3Y8"/>
<dbReference type="BioGRID" id="234867">
    <property type="interactions" value="1"/>
</dbReference>
<dbReference type="FunCoup" id="Q8R3Y8">
    <property type="interactions" value="3292"/>
</dbReference>
<dbReference type="IntAct" id="Q8R3Y8">
    <property type="interactions" value="1"/>
</dbReference>
<dbReference type="STRING" id="10090.ENSMUSP00000061234"/>
<dbReference type="GlyGen" id="Q8R3Y8">
    <property type="glycosylation" value="2 sites"/>
</dbReference>
<dbReference type="iPTMnet" id="Q8R3Y8"/>
<dbReference type="PhosphoSitePlus" id="Q8R3Y8"/>
<dbReference type="SwissPalm" id="Q8R3Y8"/>
<dbReference type="jPOST" id="Q8R3Y8"/>
<dbReference type="PaxDb" id="10090-ENSMUSP00000061234"/>
<dbReference type="PeptideAtlas" id="Q8R3Y8"/>
<dbReference type="ProteomicsDB" id="273082">
    <molecule id="Q8R3Y8-1"/>
</dbReference>
<dbReference type="ProteomicsDB" id="273083">
    <molecule id="Q8R3Y8-2"/>
</dbReference>
<dbReference type="Pumba" id="Q8R3Y8"/>
<dbReference type="Antibodypedia" id="31408">
    <property type="antibodies" value="237 antibodies from 30 providers"/>
</dbReference>
<dbReference type="DNASU" id="272359"/>
<dbReference type="Ensembl" id="ENSMUST00000053713.5">
    <molecule id="Q8R3Y8-1"/>
    <property type="protein sequence ID" value="ENSMUSP00000061234.4"/>
    <property type="gene ID" value="ENSMUSG00000044030.5"/>
</dbReference>
<dbReference type="GeneID" id="272359"/>
<dbReference type="KEGG" id="mmu:272359"/>
<dbReference type="UCSC" id="uc009fkc.1">
    <molecule id="Q8R3Y8-1"/>
    <property type="organism name" value="mouse"/>
</dbReference>
<dbReference type="AGR" id="MGI:2442159"/>
<dbReference type="CTD" id="26145"/>
<dbReference type="MGI" id="MGI:2442159">
    <property type="gene designation" value="Irf2bp1"/>
</dbReference>
<dbReference type="VEuPathDB" id="HostDB:ENSMUSG00000044030"/>
<dbReference type="eggNOG" id="KOG3579">
    <property type="taxonomic scope" value="Eukaryota"/>
</dbReference>
<dbReference type="GeneTree" id="ENSGT00940000162120"/>
<dbReference type="HOGENOM" id="CLU_019307_2_0_1"/>
<dbReference type="InParanoid" id="Q8R3Y8"/>
<dbReference type="OMA" id="MFQDCLK"/>
<dbReference type="OrthoDB" id="10065080at2759"/>
<dbReference type="PhylomeDB" id="Q8R3Y8"/>
<dbReference type="TreeFam" id="TF317075"/>
<dbReference type="BioGRID-ORCS" id="272359">
    <property type="hits" value="6 hits in 77 CRISPR screens"/>
</dbReference>
<dbReference type="PRO" id="PR:Q8R3Y8"/>
<dbReference type="Proteomes" id="UP000000589">
    <property type="component" value="Chromosome 7"/>
</dbReference>
<dbReference type="RNAct" id="Q8R3Y8">
    <property type="molecule type" value="protein"/>
</dbReference>
<dbReference type="Bgee" id="ENSMUSG00000044030">
    <property type="expression patterns" value="Expressed in perirhinal cortex and 243 other cell types or tissues"/>
</dbReference>
<dbReference type="GO" id="GO:0005654">
    <property type="term" value="C:nucleoplasm"/>
    <property type="evidence" value="ECO:0007669"/>
    <property type="project" value="Ensembl"/>
</dbReference>
<dbReference type="GO" id="GO:0005634">
    <property type="term" value="C:nucleus"/>
    <property type="evidence" value="ECO:0000266"/>
    <property type="project" value="MGI"/>
</dbReference>
<dbReference type="GO" id="GO:0003714">
    <property type="term" value="F:transcription corepressor activity"/>
    <property type="evidence" value="ECO:0000266"/>
    <property type="project" value="MGI"/>
</dbReference>
<dbReference type="GO" id="GO:0061630">
    <property type="term" value="F:ubiquitin protein ligase activity"/>
    <property type="evidence" value="ECO:0007669"/>
    <property type="project" value="Ensembl"/>
</dbReference>
<dbReference type="GO" id="GO:0008270">
    <property type="term" value="F:zinc ion binding"/>
    <property type="evidence" value="ECO:0007669"/>
    <property type="project" value="UniProtKB-KW"/>
</dbReference>
<dbReference type="GO" id="GO:0000122">
    <property type="term" value="P:negative regulation of transcription by RNA polymerase II"/>
    <property type="evidence" value="ECO:0000266"/>
    <property type="project" value="MGI"/>
</dbReference>
<dbReference type="GO" id="GO:0000209">
    <property type="term" value="P:protein polyubiquitination"/>
    <property type="evidence" value="ECO:0007669"/>
    <property type="project" value="Ensembl"/>
</dbReference>
<dbReference type="FunFam" id="1.10.10.1580:FF:000001">
    <property type="entry name" value="interferon regulatory factor 2-binding protein 2"/>
    <property type="match status" value="1"/>
</dbReference>
<dbReference type="Gene3D" id="1.10.10.1580">
    <property type="entry name" value="Interferon regulatory factor 2-binding protein"/>
    <property type="match status" value="1"/>
</dbReference>
<dbReference type="InterPro" id="IPR044882">
    <property type="entry name" value="I2BP1/2_C3HC4-RING_sf"/>
</dbReference>
<dbReference type="InterPro" id="IPR022750">
    <property type="entry name" value="Interferon_reg_fac2-bd1_2_Znf"/>
</dbReference>
<dbReference type="PANTHER" id="PTHR10816:SF17">
    <property type="entry name" value="INTERFERON REGULATORY FACTOR 2-BINDING PROTEIN 1"/>
    <property type="match status" value="1"/>
</dbReference>
<dbReference type="PANTHER" id="PTHR10816">
    <property type="entry name" value="MYELIN TRANSCRIPTION FACTOR 1-RELATED"/>
    <property type="match status" value="1"/>
</dbReference>
<dbReference type="Pfam" id="PF11261">
    <property type="entry name" value="IRF-2BP1_2"/>
    <property type="match status" value="1"/>
</dbReference>
<dbReference type="Pfam" id="PF25457">
    <property type="entry name" value="IRF-2BP1_2_M"/>
    <property type="match status" value="1"/>
</dbReference>
<dbReference type="Pfam" id="PF25454">
    <property type="entry name" value="zf-C3HC4_IRF-2BP1_2"/>
    <property type="match status" value="1"/>
</dbReference>
<dbReference type="SUPFAM" id="SSF57850">
    <property type="entry name" value="RING/U-box"/>
    <property type="match status" value="1"/>
</dbReference>
<reference key="1">
    <citation type="journal article" date="2005" name="Science">
        <title>The transcriptional landscape of the mammalian genome.</title>
        <authorList>
            <person name="Carninci P."/>
            <person name="Kasukawa T."/>
            <person name="Katayama S."/>
            <person name="Gough J."/>
            <person name="Frith M.C."/>
            <person name="Maeda N."/>
            <person name="Oyama R."/>
            <person name="Ravasi T."/>
            <person name="Lenhard B."/>
            <person name="Wells C."/>
            <person name="Kodzius R."/>
            <person name="Shimokawa K."/>
            <person name="Bajic V.B."/>
            <person name="Brenner S.E."/>
            <person name="Batalov S."/>
            <person name="Forrest A.R."/>
            <person name="Zavolan M."/>
            <person name="Davis M.J."/>
            <person name="Wilming L.G."/>
            <person name="Aidinis V."/>
            <person name="Allen J.E."/>
            <person name="Ambesi-Impiombato A."/>
            <person name="Apweiler R."/>
            <person name="Aturaliya R.N."/>
            <person name="Bailey T.L."/>
            <person name="Bansal M."/>
            <person name="Baxter L."/>
            <person name="Beisel K.W."/>
            <person name="Bersano T."/>
            <person name="Bono H."/>
            <person name="Chalk A.M."/>
            <person name="Chiu K.P."/>
            <person name="Choudhary V."/>
            <person name="Christoffels A."/>
            <person name="Clutterbuck D.R."/>
            <person name="Crowe M.L."/>
            <person name="Dalla E."/>
            <person name="Dalrymple B.P."/>
            <person name="de Bono B."/>
            <person name="Della Gatta G."/>
            <person name="di Bernardo D."/>
            <person name="Down T."/>
            <person name="Engstrom P."/>
            <person name="Fagiolini M."/>
            <person name="Faulkner G."/>
            <person name="Fletcher C.F."/>
            <person name="Fukushima T."/>
            <person name="Furuno M."/>
            <person name="Futaki S."/>
            <person name="Gariboldi M."/>
            <person name="Georgii-Hemming P."/>
            <person name="Gingeras T.R."/>
            <person name="Gojobori T."/>
            <person name="Green R.E."/>
            <person name="Gustincich S."/>
            <person name="Harbers M."/>
            <person name="Hayashi Y."/>
            <person name="Hensch T.K."/>
            <person name="Hirokawa N."/>
            <person name="Hill D."/>
            <person name="Huminiecki L."/>
            <person name="Iacono M."/>
            <person name="Ikeo K."/>
            <person name="Iwama A."/>
            <person name="Ishikawa T."/>
            <person name="Jakt M."/>
            <person name="Kanapin A."/>
            <person name="Katoh M."/>
            <person name="Kawasawa Y."/>
            <person name="Kelso J."/>
            <person name="Kitamura H."/>
            <person name="Kitano H."/>
            <person name="Kollias G."/>
            <person name="Krishnan S.P."/>
            <person name="Kruger A."/>
            <person name="Kummerfeld S.K."/>
            <person name="Kurochkin I.V."/>
            <person name="Lareau L.F."/>
            <person name="Lazarevic D."/>
            <person name="Lipovich L."/>
            <person name="Liu J."/>
            <person name="Liuni S."/>
            <person name="McWilliam S."/>
            <person name="Madan Babu M."/>
            <person name="Madera M."/>
            <person name="Marchionni L."/>
            <person name="Matsuda H."/>
            <person name="Matsuzawa S."/>
            <person name="Miki H."/>
            <person name="Mignone F."/>
            <person name="Miyake S."/>
            <person name="Morris K."/>
            <person name="Mottagui-Tabar S."/>
            <person name="Mulder N."/>
            <person name="Nakano N."/>
            <person name="Nakauchi H."/>
            <person name="Ng P."/>
            <person name="Nilsson R."/>
            <person name="Nishiguchi S."/>
            <person name="Nishikawa S."/>
            <person name="Nori F."/>
            <person name="Ohara O."/>
            <person name="Okazaki Y."/>
            <person name="Orlando V."/>
            <person name="Pang K.C."/>
            <person name="Pavan W.J."/>
            <person name="Pavesi G."/>
            <person name="Pesole G."/>
            <person name="Petrovsky N."/>
            <person name="Piazza S."/>
            <person name="Reed J."/>
            <person name="Reid J.F."/>
            <person name="Ring B.Z."/>
            <person name="Ringwald M."/>
            <person name="Rost B."/>
            <person name="Ruan Y."/>
            <person name="Salzberg S.L."/>
            <person name="Sandelin A."/>
            <person name="Schneider C."/>
            <person name="Schoenbach C."/>
            <person name="Sekiguchi K."/>
            <person name="Semple C.A."/>
            <person name="Seno S."/>
            <person name="Sessa L."/>
            <person name="Sheng Y."/>
            <person name="Shibata Y."/>
            <person name="Shimada H."/>
            <person name="Shimada K."/>
            <person name="Silva D."/>
            <person name="Sinclair B."/>
            <person name="Sperling S."/>
            <person name="Stupka E."/>
            <person name="Sugiura K."/>
            <person name="Sultana R."/>
            <person name="Takenaka Y."/>
            <person name="Taki K."/>
            <person name="Tammoja K."/>
            <person name="Tan S.L."/>
            <person name="Tang S."/>
            <person name="Taylor M.S."/>
            <person name="Tegner J."/>
            <person name="Teichmann S.A."/>
            <person name="Ueda H.R."/>
            <person name="van Nimwegen E."/>
            <person name="Verardo R."/>
            <person name="Wei C.L."/>
            <person name="Yagi K."/>
            <person name="Yamanishi H."/>
            <person name="Zabarovsky E."/>
            <person name="Zhu S."/>
            <person name="Zimmer A."/>
            <person name="Hide W."/>
            <person name="Bult C."/>
            <person name="Grimmond S.M."/>
            <person name="Teasdale R.D."/>
            <person name="Liu E.T."/>
            <person name="Brusic V."/>
            <person name="Quackenbush J."/>
            <person name="Wahlestedt C."/>
            <person name="Mattick J.S."/>
            <person name="Hume D.A."/>
            <person name="Kai C."/>
            <person name="Sasaki D."/>
            <person name="Tomaru Y."/>
            <person name="Fukuda S."/>
            <person name="Kanamori-Katayama M."/>
            <person name="Suzuki M."/>
            <person name="Aoki J."/>
            <person name="Arakawa T."/>
            <person name="Iida J."/>
            <person name="Imamura K."/>
            <person name="Itoh M."/>
            <person name="Kato T."/>
            <person name="Kawaji H."/>
            <person name="Kawagashira N."/>
            <person name="Kawashima T."/>
            <person name="Kojima M."/>
            <person name="Kondo S."/>
            <person name="Konno H."/>
            <person name="Nakano K."/>
            <person name="Ninomiya N."/>
            <person name="Nishio T."/>
            <person name="Okada M."/>
            <person name="Plessy C."/>
            <person name="Shibata K."/>
            <person name="Shiraki T."/>
            <person name="Suzuki S."/>
            <person name="Tagami M."/>
            <person name="Waki K."/>
            <person name="Watahiki A."/>
            <person name="Okamura-Oho Y."/>
            <person name="Suzuki H."/>
            <person name="Kawai J."/>
            <person name="Hayashizaki Y."/>
        </authorList>
    </citation>
    <scope>NUCLEOTIDE SEQUENCE [LARGE SCALE MRNA] (ISOFORMS 1 AND 2)</scope>
    <source>
        <strain>C57BL/6J</strain>
        <tissue>Eye</tissue>
        <tissue>Medulla oblongata</tissue>
    </source>
</reference>
<reference key="2">
    <citation type="journal article" date="2004" name="Genome Res.">
        <title>The status, quality, and expansion of the NIH full-length cDNA project: the Mammalian Gene Collection (MGC).</title>
        <authorList>
            <consortium name="The MGC Project Team"/>
        </authorList>
    </citation>
    <scope>NUCLEOTIDE SEQUENCE [LARGE SCALE MRNA] (ISOFORM 1)</scope>
    <source>
        <strain>FVB/N</strain>
        <tissue>Colon</tissue>
        <tissue>Mammary tumor</tissue>
    </source>
</reference>
<reference key="3">
    <citation type="journal article" date="2007" name="Proc. Natl. Acad. Sci. U.S.A.">
        <title>Large-scale phosphorylation analysis of mouse liver.</title>
        <authorList>
            <person name="Villen J."/>
            <person name="Beausoleil S.A."/>
            <person name="Gerber S.A."/>
            <person name="Gygi S.P."/>
        </authorList>
    </citation>
    <scope>PHOSPHORYLATION [LARGE SCALE ANALYSIS] AT SER-436</scope>
    <scope>IDENTIFICATION BY MASS SPECTROMETRY [LARGE SCALE ANALYSIS]</scope>
    <source>
        <tissue>Liver</tissue>
    </source>
</reference>
<reference key="4">
    <citation type="journal article" date="2009" name="Mol. Cell. Proteomics">
        <title>Large scale localization of protein phosphorylation by use of electron capture dissociation mass spectrometry.</title>
        <authorList>
            <person name="Sweet S.M."/>
            <person name="Bailey C.M."/>
            <person name="Cunningham D.L."/>
            <person name="Heath J.K."/>
            <person name="Cooper H.J."/>
        </authorList>
    </citation>
    <scope>PHOSPHORYLATION [LARGE SCALE ANALYSIS] AT SER-453</scope>
    <scope>IDENTIFICATION BY MASS SPECTROMETRY [LARGE SCALE ANALYSIS]</scope>
    <source>
        <tissue>Embryonic fibroblast</tissue>
    </source>
</reference>
<reference key="5">
    <citation type="journal article" date="2010" name="Cell">
        <title>A tissue-specific atlas of mouse protein phosphorylation and expression.</title>
        <authorList>
            <person name="Huttlin E.L."/>
            <person name="Jedrychowski M.P."/>
            <person name="Elias J.E."/>
            <person name="Goswami T."/>
            <person name="Rad R."/>
            <person name="Beausoleil S.A."/>
            <person name="Villen J."/>
            <person name="Haas W."/>
            <person name="Sowa M.E."/>
            <person name="Gygi S.P."/>
        </authorList>
    </citation>
    <scope>PHOSPHORYLATION [LARGE SCALE ANALYSIS] AT SER-384; SER-421; SER-436 AND SER-453</scope>
    <scope>IDENTIFICATION BY MASS SPECTROMETRY [LARGE SCALE ANALYSIS]</scope>
    <source>
        <tissue>Brain</tissue>
        <tissue>Kidney</tissue>
        <tissue>Lung</tissue>
        <tissue>Pancreas</tissue>
        <tissue>Spleen</tissue>
        <tissue>Testis</tissue>
    </source>
</reference>
<gene>
    <name type="primary">Irf2bp1</name>
</gene>
<comment type="function">
    <text evidence="1">Acts as a transcriptional corepressor in a IRF2-dependent manner; this repression is not mediated by histone deacetylase activities. May act as an E3 ligase towards JDP2, enhancing its polyubiquitination. Represses ATF2-dependent transcriptional activation.</text>
</comment>
<comment type="catalytic activity">
    <reaction>
        <text>S-ubiquitinyl-[E2 ubiquitin-conjugating enzyme]-L-cysteine + [acceptor protein]-L-lysine = [E2 ubiquitin-conjugating enzyme]-L-cysteine + N(6)-ubiquitinyl-[acceptor protein]-L-lysine.</text>
        <dbReference type="EC" id="2.3.2.27"/>
    </reaction>
</comment>
<comment type="subunit">
    <text evidence="1">Interacts with IRF2. Part of a corepressor complex containing IRF2 and IRF2BP2. Interacts with JDP2.</text>
</comment>
<comment type="subcellular location">
    <subcellularLocation>
        <location evidence="1">Nucleus</location>
    </subcellularLocation>
</comment>
<comment type="alternative products">
    <event type="alternative splicing"/>
    <isoform>
        <id>Q8R3Y8-1</id>
        <name>1</name>
        <sequence type="displayed"/>
    </isoform>
    <isoform>
        <id>Q8R3Y8-2</id>
        <name>2</name>
        <sequence type="described" ref="VSP_032768"/>
    </isoform>
</comment>
<comment type="similarity">
    <text evidence="5">Belongs to the IRF2BP family.</text>
</comment>
<evidence type="ECO:0000250" key="1">
    <source>
        <dbReference type="UniProtKB" id="Q8IU81"/>
    </source>
</evidence>
<evidence type="ECO:0000255" key="2"/>
<evidence type="ECO:0000256" key="3">
    <source>
        <dbReference type="SAM" id="MobiDB-lite"/>
    </source>
</evidence>
<evidence type="ECO:0000303" key="4">
    <source>
    </source>
</evidence>
<evidence type="ECO:0000305" key="5"/>
<evidence type="ECO:0007744" key="6">
    <source>
    </source>
</evidence>
<evidence type="ECO:0007744" key="7">
    <source>
    </source>
</evidence>
<evidence type="ECO:0007744" key="8">
    <source>
    </source>
</evidence>
<name>I2BP1_MOUSE</name>
<organism>
    <name type="scientific">Mus musculus</name>
    <name type="common">Mouse</name>
    <dbReference type="NCBI Taxonomy" id="10090"/>
    <lineage>
        <taxon>Eukaryota</taxon>
        <taxon>Metazoa</taxon>
        <taxon>Chordata</taxon>
        <taxon>Craniata</taxon>
        <taxon>Vertebrata</taxon>
        <taxon>Euteleostomi</taxon>
        <taxon>Mammalia</taxon>
        <taxon>Eutheria</taxon>
        <taxon>Euarchontoglires</taxon>
        <taxon>Glires</taxon>
        <taxon>Rodentia</taxon>
        <taxon>Myomorpha</taxon>
        <taxon>Muroidea</taxon>
        <taxon>Muridae</taxon>
        <taxon>Murinae</taxon>
        <taxon>Mus</taxon>
        <taxon>Mus</taxon>
    </lineage>
</organism>
<protein>
    <recommendedName>
        <fullName>Interferon regulatory factor 2-binding protein 1</fullName>
        <shortName>IRF-2-binding protein 1</shortName>
        <shortName>IRF-2BP1</shortName>
    </recommendedName>
    <alternativeName>
        <fullName>Probable E3 ubiquitin-protein ligase IRF2BP1</fullName>
        <ecNumber>2.3.2.27</ecNumber>
    </alternativeName>
    <alternativeName>
        <fullName evidence="5">Probable RING-type E3 ubiquitin transferase IRF2BP1</fullName>
    </alternativeName>
</protein>
<feature type="chain" id="PRO_0000328730" description="Interferon regulatory factor 2-binding protein 1">
    <location>
        <begin position="1"/>
        <end position="584"/>
    </location>
</feature>
<feature type="zinc finger region" description="RING-type; degenerate">
    <location>
        <begin position="503"/>
        <end position="550"/>
    </location>
</feature>
<feature type="region of interest" description="Disordered" evidence="3">
    <location>
        <begin position="59"/>
        <end position="120"/>
    </location>
</feature>
<feature type="region of interest" description="Disordered" evidence="3">
    <location>
        <begin position="346"/>
        <end position="421"/>
    </location>
</feature>
<feature type="region of interest" description="Disordered" evidence="3">
    <location>
        <begin position="433"/>
        <end position="495"/>
    </location>
</feature>
<feature type="region of interest" description="Cys-rich">
    <location>
        <begin position="503"/>
        <end position="550"/>
    </location>
</feature>
<feature type="coiled-coil region" evidence="2">
    <location>
        <begin position="197"/>
        <end position="217"/>
    </location>
</feature>
<feature type="compositionally biased region" description="Low complexity" evidence="3">
    <location>
        <begin position="82"/>
        <end position="100"/>
    </location>
</feature>
<feature type="compositionally biased region" description="Pro residues" evidence="3">
    <location>
        <begin position="354"/>
        <end position="369"/>
    </location>
</feature>
<feature type="compositionally biased region" description="Low complexity" evidence="3">
    <location>
        <begin position="449"/>
        <end position="458"/>
    </location>
</feature>
<feature type="modified residue" description="Phosphoserine" evidence="1">
    <location>
        <position position="66"/>
    </location>
</feature>
<feature type="modified residue" description="Phosphoserine" evidence="1">
    <location>
        <position position="125"/>
    </location>
</feature>
<feature type="modified residue" description="Omega-N-methylarginine" evidence="1">
    <location>
        <position position="177"/>
    </location>
</feature>
<feature type="modified residue" description="Phosphoserine" evidence="1">
    <location>
        <position position="186"/>
    </location>
</feature>
<feature type="modified residue" description="Phosphoserine" evidence="1">
    <location>
        <position position="371"/>
    </location>
</feature>
<feature type="modified residue" description="Phosphoserine" evidence="8">
    <location>
        <position position="384"/>
    </location>
</feature>
<feature type="modified residue" description="Phosphoserine" evidence="8">
    <location>
        <position position="421"/>
    </location>
</feature>
<feature type="modified residue" description="Phosphoserine" evidence="6 8">
    <location>
        <position position="436"/>
    </location>
</feature>
<feature type="modified residue" description="Phosphoserine" evidence="7 8">
    <location>
        <position position="453"/>
    </location>
</feature>
<feature type="modified residue" description="Phosphoserine" evidence="1">
    <location>
        <position position="457"/>
    </location>
</feature>
<feature type="cross-link" description="Glycyl lysine isopeptide (Lys-Gly) (interchain with G-Cter in SUMO2)" evidence="1">
    <location>
        <position position="227"/>
    </location>
</feature>
<feature type="cross-link" description="Glycyl lysine isopeptide (Lys-Gly) (interchain with G-Cter in SUMO2)" evidence="1">
    <location>
        <position position="438"/>
    </location>
</feature>
<feature type="splice variant" id="VSP_032768" description="In isoform 2." evidence="4">
    <original>MASVQASRRQWCYLCDLPKM</original>
    <variation>M</variation>
    <location>
        <begin position="1"/>
        <end position="20"/>
    </location>
</feature>
<feature type="sequence conflict" description="In Ref. 1; BAC39883." evidence="5" ref="1">
    <original>Q</original>
    <variation>H</variation>
    <location>
        <position position="54"/>
    </location>
</feature>
<feature type="sequence conflict" description="In Ref. 1; BAC39883." evidence="5" ref="1">
    <original>A</original>
    <variation>P</variation>
    <location>
        <position position="81"/>
    </location>
</feature>
<feature type="sequence conflict" description="In Ref. 1; BAC39883." evidence="5" ref="1">
    <original>S</original>
    <variation>L</variation>
    <location>
        <position position="107"/>
    </location>
</feature>
<feature type="sequence conflict" description="In Ref. 1; BAC27572." evidence="5" ref="1">
    <original>S</original>
    <variation>T</variation>
    <location>
        <position position="186"/>
    </location>
</feature>
<feature type="sequence conflict" description="In Ref. 1; BAC27572." evidence="5" ref="1">
    <original>R</original>
    <variation>Q</variation>
    <location>
        <position position="372"/>
    </location>
</feature>
<accession>Q8R3Y8</accession>
<accession>Q8BJC9</accession>
<accession>Q8C0B1</accession>
<accession>Q8CI76</accession>
<proteinExistence type="evidence at protein level"/>